<proteinExistence type="evidence at transcript level"/>
<name>LTOR3_XENTR</name>
<accession>B4F6Y3</accession>
<keyword id="KW-0967">Endosome</keyword>
<keyword id="KW-0472">Membrane</keyword>
<keyword id="KW-1185">Reference proteome</keyword>
<dbReference type="EMBL" id="BC168057">
    <property type="protein sequence ID" value="AAI68057.1"/>
    <property type="molecule type" value="mRNA"/>
</dbReference>
<dbReference type="RefSeq" id="NP_001135566.1">
    <property type="nucleotide sequence ID" value="NM_001142094.1"/>
</dbReference>
<dbReference type="SMR" id="B4F6Y3"/>
<dbReference type="FunCoup" id="B4F6Y3">
    <property type="interactions" value="1459"/>
</dbReference>
<dbReference type="STRING" id="8364.ENSXETP00000047176"/>
<dbReference type="PaxDb" id="8364-ENSXETP00000056222"/>
<dbReference type="GeneID" id="100216113"/>
<dbReference type="KEGG" id="xtr:100216113"/>
<dbReference type="AGR" id="Xenbase:XB-GENE-942321"/>
<dbReference type="CTD" id="100041958"/>
<dbReference type="Xenbase" id="XB-GENE-942321">
    <property type="gene designation" value="lamtor3l"/>
</dbReference>
<dbReference type="eggNOG" id="ENOG502RYGZ">
    <property type="taxonomic scope" value="Eukaryota"/>
</dbReference>
<dbReference type="InParanoid" id="B4F6Y3"/>
<dbReference type="OMA" id="YQVIQMN"/>
<dbReference type="OrthoDB" id="343907at2759"/>
<dbReference type="Reactome" id="R-XTR-1632852">
    <property type="pathway name" value="Macroautophagy"/>
</dbReference>
<dbReference type="Reactome" id="R-XTR-165159">
    <property type="pathway name" value="MTOR signalling"/>
</dbReference>
<dbReference type="Reactome" id="R-XTR-380972">
    <property type="pathway name" value="Energy dependent regulation of mTOR by LKB1-AMPK"/>
</dbReference>
<dbReference type="Reactome" id="R-XTR-5628897">
    <property type="pathway name" value="TP53 Regulates Metabolic Genes"/>
</dbReference>
<dbReference type="Reactome" id="R-XTR-6798695">
    <property type="pathway name" value="Neutrophil degranulation"/>
</dbReference>
<dbReference type="Reactome" id="R-XTR-9639288">
    <property type="pathway name" value="Amino acids regulate mTORC1"/>
</dbReference>
<dbReference type="Proteomes" id="UP000008143">
    <property type="component" value="Chromosome 5"/>
</dbReference>
<dbReference type="GO" id="GO:0031902">
    <property type="term" value="C:late endosome membrane"/>
    <property type="evidence" value="ECO:0007669"/>
    <property type="project" value="UniProtKB-SubCell"/>
</dbReference>
<dbReference type="GO" id="GO:0005765">
    <property type="term" value="C:lysosomal membrane"/>
    <property type="evidence" value="ECO:0000250"/>
    <property type="project" value="UniProtKB"/>
</dbReference>
<dbReference type="GO" id="GO:0071986">
    <property type="term" value="C:Ragulator complex"/>
    <property type="evidence" value="ECO:0000250"/>
    <property type="project" value="UniProtKB"/>
</dbReference>
<dbReference type="GO" id="GO:0071230">
    <property type="term" value="P:cellular response to amino acid stimulus"/>
    <property type="evidence" value="ECO:0000250"/>
    <property type="project" value="UniProtKB"/>
</dbReference>
<dbReference type="GO" id="GO:0032008">
    <property type="term" value="P:positive regulation of TOR signaling"/>
    <property type="evidence" value="ECO:0000250"/>
    <property type="project" value="UniProtKB"/>
</dbReference>
<dbReference type="GO" id="GO:1904263">
    <property type="term" value="P:positive regulation of TORC1 signaling"/>
    <property type="evidence" value="ECO:0000250"/>
    <property type="project" value="UniProtKB"/>
</dbReference>
<dbReference type="GO" id="GO:0008104">
    <property type="term" value="P:protein localization"/>
    <property type="evidence" value="ECO:0000250"/>
    <property type="project" value="UniProtKB"/>
</dbReference>
<dbReference type="FunFam" id="3.30.450.30:FF:000003">
    <property type="entry name" value="ragulator complex protein LAMTOR3 homolog"/>
    <property type="match status" value="1"/>
</dbReference>
<dbReference type="Gene3D" id="3.30.450.30">
    <property type="entry name" value="Dynein light chain 2a, cytoplasmic"/>
    <property type="match status" value="1"/>
</dbReference>
<dbReference type="InterPro" id="IPR015019">
    <property type="entry name" value="LAMTOR3"/>
</dbReference>
<dbReference type="PANTHER" id="PTHR13378:SF1">
    <property type="entry name" value="RAGULATOR COMPLEX PROTEIN LAMTOR3"/>
    <property type="match status" value="1"/>
</dbReference>
<dbReference type="PANTHER" id="PTHR13378">
    <property type="entry name" value="REGULATOR COMPLEX PROTEIN LAMTOR3"/>
    <property type="match status" value="1"/>
</dbReference>
<dbReference type="Pfam" id="PF08923">
    <property type="entry name" value="MAPKK1_Int"/>
    <property type="match status" value="1"/>
</dbReference>
<dbReference type="SMART" id="SM01278">
    <property type="entry name" value="MAPKK1_Int"/>
    <property type="match status" value="1"/>
</dbReference>
<dbReference type="SUPFAM" id="SSF103196">
    <property type="entry name" value="Roadblock/LC7 domain"/>
    <property type="match status" value="1"/>
</dbReference>
<feature type="chain" id="PRO_0000356167" description="Ragulator complex protein LAMTOR3">
    <location>
        <begin position="1"/>
        <end position="124"/>
    </location>
</feature>
<protein>
    <recommendedName>
        <fullName>Ragulator complex protein LAMTOR3</fullName>
    </recommendedName>
    <alternativeName>
        <fullName>Late endosomal/lysosomal adaptor and MAPK and MTOR activator 3</fullName>
    </alternativeName>
    <alternativeName>
        <fullName>Mitogen-activated protein kinase scaffold protein 1</fullName>
    </alternativeName>
</protein>
<gene>
    <name type="primary">lamtor3</name>
    <name type="synonym">mapksp1</name>
</gene>
<reference key="1">
    <citation type="submission" date="2008-07" db="EMBL/GenBank/DDBJ databases">
        <authorList>
            <consortium name="NIH - Xenopus Gene Collection (XGC) project"/>
        </authorList>
    </citation>
    <scope>NUCLEOTIDE SEQUENCE [LARGE SCALE MRNA]</scope>
    <source>
        <strain>PopA</strain>
    </source>
</reference>
<evidence type="ECO:0000250" key="1">
    <source>
        <dbReference type="UniProtKB" id="O88653"/>
    </source>
</evidence>
<evidence type="ECO:0000250" key="2">
    <source>
        <dbReference type="UniProtKB" id="Q9UHA4"/>
    </source>
</evidence>
<evidence type="ECO:0000305" key="3"/>
<comment type="function">
    <text evidence="2">As part of the Ragulator complex it is involved in amino acid sensing and activation of mTORC1, a signaling complex promoting cell growth in response to growth factors, energy levels, and amino acids. Activated by amino acids through a mechanism involving the lysosomal V-ATPase, the Ragulator plays a dual role for the small GTPases Rag (RagA/RRAGA, RagB/RRAGB, RagC/RRAGC and/or RagD/RRAGD): it (1) acts as a guanine nucleotide exchange factor (GEF), activating the small GTPases Rag and (2) mediates recruitment of Rag GTPases to the lysosome membrane. Activated Ragulator and Rag GTPases function as a scaffold recruiting mTORC1 to lysosomes where it is in turn activated.</text>
</comment>
<comment type="subunit">
    <text evidence="1 2">Part of the Ragulator complex composed of lamtor1, lamtor2, lamtor3, lamtor4 and lamtor5. The Ragulator complex interacts with slc38a9; the probable amino acid sensor. Component of the lysosomal folliculin complex (LFC).</text>
</comment>
<comment type="subcellular location">
    <subcellularLocation>
        <location evidence="1">Late endosome membrane</location>
        <topology evidence="1">Peripheral membrane protein</topology>
        <orientation evidence="1">Cytoplasmic side</orientation>
    </subcellularLocation>
    <text evidence="1">Recruited to lysosome and endosome membranes by LAMTOR1.</text>
</comment>
<comment type="similarity">
    <text evidence="3">Belongs to the LAMTOR3 family.</text>
</comment>
<sequence>MAEELRRFLYKKLTSVDELHAIVVSDRDGVPVIKVANENAPEHALRPAFLSTFALATDQGSKLGLSKNKSIICYYSTYQVVQFNQLPLVVSFIASCNANTGLILSLEEELGSLFKELRQVVEIS</sequence>
<organism>
    <name type="scientific">Xenopus tropicalis</name>
    <name type="common">Western clawed frog</name>
    <name type="synonym">Silurana tropicalis</name>
    <dbReference type="NCBI Taxonomy" id="8364"/>
    <lineage>
        <taxon>Eukaryota</taxon>
        <taxon>Metazoa</taxon>
        <taxon>Chordata</taxon>
        <taxon>Craniata</taxon>
        <taxon>Vertebrata</taxon>
        <taxon>Euteleostomi</taxon>
        <taxon>Amphibia</taxon>
        <taxon>Batrachia</taxon>
        <taxon>Anura</taxon>
        <taxon>Pipoidea</taxon>
        <taxon>Pipidae</taxon>
        <taxon>Xenopodinae</taxon>
        <taxon>Xenopus</taxon>
        <taxon>Silurana</taxon>
    </lineage>
</organism>